<reference key="1">
    <citation type="journal article" date="2003" name="Proc. Natl. Acad. Sci. U.S.A.">
        <title>Complete genome sequence of Lactobacillus plantarum WCFS1.</title>
        <authorList>
            <person name="Kleerebezem M."/>
            <person name="Boekhorst J."/>
            <person name="van Kranenburg R."/>
            <person name="Molenaar D."/>
            <person name="Kuipers O.P."/>
            <person name="Leer R."/>
            <person name="Tarchini R."/>
            <person name="Peters S.A."/>
            <person name="Sandbrink H.M."/>
            <person name="Fiers M.W.E.J."/>
            <person name="Stiekema W."/>
            <person name="Klein Lankhorst R.M."/>
            <person name="Bron P.A."/>
            <person name="Hoffer S.M."/>
            <person name="Nierop Groot M.N."/>
            <person name="Kerkhoven R."/>
            <person name="De Vries M."/>
            <person name="Ursing B."/>
            <person name="De Vos W.M."/>
            <person name="Siezen R.J."/>
        </authorList>
    </citation>
    <scope>NUCLEOTIDE SEQUENCE [LARGE SCALE GENOMIC DNA]</scope>
    <source>
        <strain>ATCC BAA-793 / NCIMB 8826 / WCFS1</strain>
    </source>
</reference>
<reference key="2">
    <citation type="journal article" date="2012" name="J. Bacteriol.">
        <title>Complete resequencing and reannotation of the Lactobacillus plantarum WCFS1 genome.</title>
        <authorList>
            <person name="Siezen R.J."/>
            <person name="Francke C."/>
            <person name="Renckens B."/>
            <person name="Boekhorst J."/>
            <person name="Wels M."/>
            <person name="Kleerebezem M."/>
            <person name="van Hijum S.A."/>
        </authorList>
    </citation>
    <scope>NUCLEOTIDE SEQUENCE [LARGE SCALE GENOMIC DNA]</scope>
    <scope>GENOME REANNOTATION</scope>
    <source>
        <strain>ATCC BAA-793 / NCIMB 8826 / WCFS1</strain>
    </source>
</reference>
<gene>
    <name type="primary">acyP</name>
    <name type="ordered locus">lp_1554</name>
</gene>
<organism>
    <name type="scientific">Lactiplantibacillus plantarum (strain ATCC BAA-793 / NCIMB 8826 / WCFS1)</name>
    <name type="common">Lactobacillus plantarum</name>
    <dbReference type="NCBI Taxonomy" id="220668"/>
    <lineage>
        <taxon>Bacteria</taxon>
        <taxon>Bacillati</taxon>
        <taxon>Bacillota</taxon>
        <taxon>Bacilli</taxon>
        <taxon>Lactobacillales</taxon>
        <taxon>Lactobacillaceae</taxon>
        <taxon>Lactiplantibacillus</taxon>
    </lineage>
</organism>
<feature type="chain" id="PRO_0000326728" description="Acylphosphatase">
    <location>
        <begin position="1"/>
        <end position="90"/>
    </location>
</feature>
<feature type="domain" description="Acylphosphatase-like" evidence="1">
    <location>
        <begin position="3"/>
        <end position="90"/>
    </location>
</feature>
<feature type="active site" evidence="1">
    <location>
        <position position="18"/>
    </location>
</feature>
<feature type="active site" evidence="1">
    <location>
        <position position="36"/>
    </location>
</feature>
<protein>
    <recommendedName>
        <fullName>Acylphosphatase</fullName>
        <ecNumber>3.6.1.7</ecNumber>
    </recommendedName>
    <alternativeName>
        <fullName>Acylphosphate phosphohydrolase</fullName>
    </alternativeName>
</protein>
<comment type="catalytic activity">
    <reaction>
        <text>an acyl phosphate + H2O = a carboxylate + phosphate + H(+)</text>
        <dbReference type="Rhea" id="RHEA:14965"/>
        <dbReference type="ChEBI" id="CHEBI:15377"/>
        <dbReference type="ChEBI" id="CHEBI:15378"/>
        <dbReference type="ChEBI" id="CHEBI:29067"/>
        <dbReference type="ChEBI" id="CHEBI:43474"/>
        <dbReference type="ChEBI" id="CHEBI:59918"/>
        <dbReference type="EC" id="3.6.1.7"/>
    </reaction>
</comment>
<comment type="similarity">
    <text evidence="2">Belongs to the acylphosphatase family.</text>
</comment>
<evidence type="ECO:0000255" key="1">
    <source>
        <dbReference type="PROSITE-ProRule" id="PRU00520"/>
    </source>
</evidence>
<evidence type="ECO:0000305" key="2"/>
<proteinExistence type="inferred from homology"/>
<sequence>MRAVTLKATGRVQGVGFRWATKVAADKCGVNGIVRNLMDGSVFIEAEGEDQRVQVFIDVVRQSPTDFGKVKHLEVHEVEPQNYHDFRITN</sequence>
<name>ACYP_LACPL</name>
<keyword id="KW-0378">Hydrolase</keyword>
<keyword id="KW-1185">Reference proteome</keyword>
<dbReference type="EC" id="3.6.1.7"/>
<dbReference type="EMBL" id="AL935263">
    <property type="protein sequence ID" value="CCC78873.1"/>
    <property type="molecule type" value="Genomic_DNA"/>
</dbReference>
<dbReference type="RefSeq" id="WP_003638559.1">
    <property type="nucleotide sequence ID" value="NC_004567.2"/>
</dbReference>
<dbReference type="RefSeq" id="YP_004889387.1">
    <property type="nucleotide sequence ID" value="NC_004567.2"/>
</dbReference>
<dbReference type="SMR" id="Q88WR7"/>
<dbReference type="STRING" id="220668.lp_1554"/>
<dbReference type="EnsemblBacteria" id="CCC78873">
    <property type="protein sequence ID" value="CCC78873"/>
    <property type="gene ID" value="lp_1554"/>
</dbReference>
<dbReference type="KEGG" id="lpl:lp_1554"/>
<dbReference type="PATRIC" id="fig|220668.9.peg.1307"/>
<dbReference type="eggNOG" id="COG1254">
    <property type="taxonomic scope" value="Bacteria"/>
</dbReference>
<dbReference type="HOGENOM" id="CLU_141932_3_2_9"/>
<dbReference type="OrthoDB" id="9808093at2"/>
<dbReference type="PhylomeDB" id="Q88WR7"/>
<dbReference type="Proteomes" id="UP000000432">
    <property type="component" value="Chromosome"/>
</dbReference>
<dbReference type="GO" id="GO:0003998">
    <property type="term" value="F:acylphosphatase activity"/>
    <property type="evidence" value="ECO:0007669"/>
    <property type="project" value="UniProtKB-EC"/>
</dbReference>
<dbReference type="Gene3D" id="3.30.70.100">
    <property type="match status" value="1"/>
</dbReference>
<dbReference type="InterPro" id="IPR020456">
    <property type="entry name" value="Acylphosphatase"/>
</dbReference>
<dbReference type="InterPro" id="IPR001792">
    <property type="entry name" value="Acylphosphatase-like_dom"/>
</dbReference>
<dbReference type="InterPro" id="IPR036046">
    <property type="entry name" value="Acylphosphatase-like_dom_sf"/>
</dbReference>
<dbReference type="PANTHER" id="PTHR47268">
    <property type="entry name" value="ACYLPHOSPHATASE"/>
    <property type="match status" value="1"/>
</dbReference>
<dbReference type="PANTHER" id="PTHR47268:SF4">
    <property type="entry name" value="ACYLPHOSPHATASE"/>
    <property type="match status" value="1"/>
</dbReference>
<dbReference type="Pfam" id="PF00708">
    <property type="entry name" value="Acylphosphatase"/>
    <property type="match status" value="1"/>
</dbReference>
<dbReference type="SUPFAM" id="SSF54975">
    <property type="entry name" value="Acylphosphatase/BLUF domain-like"/>
    <property type="match status" value="1"/>
</dbReference>
<dbReference type="PROSITE" id="PS51160">
    <property type="entry name" value="ACYLPHOSPHATASE_3"/>
    <property type="match status" value="1"/>
</dbReference>
<accession>Q88WR7</accession>
<accession>F9UNT4</accession>